<protein>
    <recommendedName>
        <fullName evidence="1">Adenylate kinase isoenzyme 6</fullName>
        <shortName evidence="1">AK6</shortName>
        <ecNumber evidence="1">2.7.4.3</ecNumber>
    </recommendedName>
    <alternativeName>
        <fullName evidence="1">Coilin-interacting nuclear ATPase protein</fullName>
    </alternativeName>
    <alternativeName>
        <fullName evidence="1">Dual activity adenylate kinase/ATPase</fullName>
        <shortName evidence="1">AK/ATPase</shortName>
    </alternativeName>
</protein>
<accession>Q8VCP8</accession>
<sequence length="172" mass="19947">MKLPNILLTGTPGVGKTTLGKELASRSGLKYVNVGDLAREGQLYDGYDEEYGCPILDEDRVVDELEHQMQEGGVIVDYHGCDFFPERWFHIVFVLRTDNGVLYKRLETRGYNEKKLQDNIQCEIFQVLYEEAIASYKEEIVHQLPSNEPEQLEDNINQISKWIEQWVKDHNP</sequence>
<feature type="chain" id="PRO_0000153897" description="Adenylate kinase isoenzyme 6">
    <location>
        <begin position="1"/>
        <end position="172"/>
    </location>
</feature>
<feature type="region of interest" description="NMPbind" evidence="1">
    <location>
        <begin position="33"/>
        <end position="56"/>
    </location>
</feature>
<feature type="region of interest" description="LID" evidence="1">
    <location>
        <begin position="108"/>
        <end position="118"/>
    </location>
</feature>
<feature type="binding site" evidence="1">
    <location>
        <position position="13"/>
    </location>
    <ligand>
        <name>ATP</name>
        <dbReference type="ChEBI" id="CHEBI:30616"/>
    </ligand>
</feature>
<feature type="binding site" evidence="1">
    <location>
        <position position="15"/>
    </location>
    <ligand>
        <name>ATP</name>
        <dbReference type="ChEBI" id="CHEBI:30616"/>
    </ligand>
</feature>
<feature type="binding site" evidence="1">
    <location>
        <position position="16"/>
    </location>
    <ligand>
        <name>ATP</name>
        <dbReference type="ChEBI" id="CHEBI:30616"/>
    </ligand>
</feature>
<feature type="binding site" evidence="1">
    <location>
        <position position="17"/>
    </location>
    <ligand>
        <name>ATP</name>
        <dbReference type="ChEBI" id="CHEBI:30616"/>
    </ligand>
</feature>
<feature type="binding site" evidence="1">
    <location>
        <position position="18"/>
    </location>
    <ligand>
        <name>ATP</name>
        <dbReference type="ChEBI" id="CHEBI:30616"/>
    </ligand>
</feature>
<feature type="binding site" evidence="1">
    <location>
        <position position="109"/>
    </location>
    <ligand>
        <name>ATP</name>
        <dbReference type="ChEBI" id="CHEBI:30616"/>
    </ligand>
</feature>
<organism>
    <name type="scientific">Mus musculus</name>
    <name type="common">Mouse</name>
    <dbReference type="NCBI Taxonomy" id="10090"/>
    <lineage>
        <taxon>Eukaryota</taxon>
        <taxon>Metazoa</taxon>
        <taxon>Chordata</taxon>
        <taxon>Craniata</taxon>
        <taxon>Vertebrata</taxon>
        <taxon>Euteleostomi</taxon>
        <taxon>Mammalia</taxon>
        <taxon>Eutheria</taxon>
        <taxon>Euarchontoglires</taxon>
        <taxon>Glires</taxon>
        <taxon>Rodentia</taxon>
        <taxon>Myomorpha</taxon>
        <taxon>Muroidea</taxon>
        <taxon>Muridae</taxon>
        <taxon>Murinae</taxon>
        <taxon>Mus</taxon>
        <taxon>Mus</taxon>
    </lineage>
</organism>
<dbReference type="EC" id="2.7.4.3" evidence="1"/>
<dbReference type="EMBL" id="BC019453">
    <property type="protein sequence ID" value="AAH19453.1"/>
    <property type="molecule type" value="mRNA"/>
</dbReference>
<dbReference type="CCDS" id="CCDS26734.1"/>
<dbReference type="RefSeq" id="NP_081868.1">
    <property type="nucleotide sequence ID" value="NM_027592.3"/>
</dbReference>
<dbReference type="SMR" id="Q8VCP8"/>
<dbReference type="FunCoup" id="Q8VCP8">
    <property type="interactions" value="2950"/>
</dbReference>
<dbReference type="iPTMnet" id="Q8VCP8"/>
<dbReference type="PhosphoSitePlus" id="Q8VCP8"/>
<dbReference type="jPOST" id="Q8VCP8"/>
<dbReference type="PaxDb" id="10090-ENSMUSP00000022135"/>
<dbReference type="PeptideAtlas" id="Q8VCP8"/>
<dbReference type="ProteomicsDB" id="269172"/>
<dbReference type="Pumba" id="Q8VCP8"/>
<dbReference type="DNASU" id="108143"/>
<dbReference type="Ensembl" id="ENSMUST00000022135.15">
    <property type="protein sequence ID" value="ENSMUSP00000022135.9"/>
    <property type="gene ID" value="ENSMUSG00000078941.10"/>
</dbReference>
<dbReference type="GeneID" id="102216272"/>
<dbReference type="KEGG" id="mmu:102216272"/>
<dbReference type="UCSC" id="uc007rrg.3">
    <property type="organism name" value="mouse"/>
</dbReference>
<dbReference type="AGR" id="MGI:5510732"/>
<dbReference type="CTD" id="102157402"/>
<dbReference type="MGI" id="MGI:5510732">
    <property type="gene designation" value="Ak6"/>
</dbReference>
<dbReference type="VEuPathDB" id="HostDB:ENSMUSG00000078941"/>
<dbReference type="eggNOG" id="KOG3347">
    <property type="taxonomic scope" value="Eukaryota"/>
</dbReference>
<dbReference type="GeneTree" id="ENSGT00940000155097"/>
<dbReference type="HOGENOM" id="CLU_079096_3_1_1"/>
<dbReference type="InParanoid" id="Q8VCP8"/>
<dbReference type="OMA" id="QCEIFGT"/>
<dbReference type="OrthoDB" id="10251185at2759"/>
<dbReference type="PhylomeDB" id="Q8VCP8"/>
<dbReference type="TreeFam" id="TF313388"/>
<dbReference type="Reactome" id="R-MMU-499943">
    <property type="pathway name" value="Interconversion of nucleotide di- and triphosphates"/>
</dbReference>
<dbReference type="BioGRID-ORCS" id="102216272">
    <property type="hits" value="24 hits in 56 CRISPR screens"/>
</dbReference>
<dbReference type="ChiTaRS" id="Ak6">
    <property type="organism name" value="mouse"/>
</dbReference>
<dbReference type="PRO" id="PR:Q8VCP8"/>
<dbReference type="Proteomes" id="UP000000589">
    <property type="component" value="Chromosome 13"/>
</dbReference>
<dbReference type="RNAct" id="Q8VCP8">
    <property type="molecule type" value="protein"/>
</dbReference>
<dbReference type="Bgee" id="ENSMUSG00000078941">
    <property type="expression patterns" value="Expressed in epiblast cell in embryo and 271 other cell types or tissues"/>
</dbReference>
<dbReference type="ExpressionAtlas" id="Q8VCP8">
    <property type="expression patterns" value="baseline and differential"/>
</dbReference>
<dbReference type="GO" id="GO:0015030">
    <property type="term" value="C:Cajal body"/>
    <property type="evidence" value="ECO:0000250"/>
    <property type="project" value="UniProtKB"/>
</dbReference>
<dbReference type="GO" id="GO:0005737">
    <property type="term" value="C:cytoplasm"/>
    <property type="evidence" value="ECO:0007669"/>
    <property type="project" value="UniProtKB-SubCell"/>
</dbReference>
<dbReference type="GO" id="GO:0005654">
    <property type="term" value="C:nucleoplasm"/>
    <property type="evidence" value="ECO:0000250"/>
    <property type="project" value="UniProtKB"/>
</dbReference>
<dbReference type="GO" id="GO:0004017">
    <property type="term" value="F:adenylate kinase activity"/>
    <property type="evidence" value="ECO:0000250"/>
    <property type="project" value="UniProtKB"/>
</dbReference>
<dbReference type="GO" id="GO:0005524">
    <property type="term" value="F:ATP binding"/>
    <property type="evidence" value="ECO:0007669"/>
    <property type="project" value="UniProtKB-KW"/>
</dbReference>
<dbReference type="GO" id="GO:0016887">
    <property type="term" value="F:ATP hydrolysis activity"/>
    <property type="evidence" value="ECO:0007669"/>
    <property type="project" value="UniProtKB-UniRule"/>
</dbReference>
<dbReference type="GO" id="GO:0042274">
    <property type="term" value="P:ribosomal small subunit biogenesis"/>
    <property type="evidence" value="ECO:0007669"/>
    <property type="project" value="UniProtKB-UniRule"/>
</dbReference>
<dbReference type="GO" id="GO:0006364">
    <property type="term" value="P:rRNA processing"/>
    <property type="evidence" value="ECO:0007669"/>
    <property type="project" value="UniProtKB-KW"/>
</dbReference>
<dbReference type="FunFam" id="3.40.50.300:FF:003001">
    <property type="entry name" value="Adenylate kinase isoenzyme 6"/>
    <property type="match status" value="1"/>
</dbReference>
<dbReference type="Gene3D" id="3.40.50.300">
    <property type="entry name" value="P-loop containing nucleotide triphosphate hydrolases"/>
    <property type="match status" value="1"/>
</dbReference>
<dbReference type="HAMAP" id="MF_00039">
    <property type="entry name" value="Adenylate_kinase_AK6"/>
    <property type="match status" value="1"/>
</dbReference>
<dbReference type="InterPro" id="IPR020618">
    <property type="entry name" value="Adenyl_kinase_AK6"/>
</dbReference>
<dbReference type="InterPro" id="IPR027417">
    <property type="entry name" value="P-loop_NTPase"/>
</dbReference>
<dbReference type="PANTHER" id="PTHR12595:SF0">
    <property type="entry name" value="ADENYLATE KINASE ISOENZYME 6"/>
    <property type="match status" value="1"/>
</dbReference>
<dbReference type="PANTHER" id="PTHR12595">
    <property type="entry name" value="POS9-ACTIVATING FACTOR FAP7-RELATED"/>
    <property type="match status" value="1"/>
</dbReference>
<dbReference type="Pfam" id="PF13238">
    <property type="entry name" value="AAA_18"/>
    <property type="match status" value="1"/>
</dbReference>
<dbReference type="SUPFAM" id="SSF52540">
    <property type="entry name" value="P-loop containing nucleoside triphosphate hydrolases"/>
    <property type="match status" value="1"/>
</dbReference>
<name>KAD6_MOUSE</name>
<keyword id="KW-0067">ATP-binding</keyword>
<keyword id="KW-0963">Cytoplasm</keyword>
<keyword id="KW-0418">Kinase</keyword>
<keyword id="KW-0547">Nucleotide-binding</keyword>
<keyword id="KW-0539">Nucleus</keyword>
<keyword id="KW-1185">Reference proteome</keyword>
<keyword id="KW-0690">Ribosome biogenesis</keyword>
<keyword id="KW-0698">rRNA processing</keyword>
<keyword id="KW-0808">Transferase</keyword>
<evidence type="ECO:0000255" key="1">
    <source>
        <dbReference type="HAMAP-Rule" id="MF_03173"/>
    </source>
</evidence>
<evidence type="ECO:0000305" key="2"/>
<comment type="function">
    <text evidence="1">Broad-specificity nucleoside monophosphate (NMP) kinase that catalyzes the reversible transfer of the terminal phosphate group between nucleoside triphosphates and monophosphates. Also has ATPase activity. Involved in the late cytoplasmic maturation steps of the 40S ribosomal particles, specifically 18S rRNA maturation. While NMP activity is not required for ribosome maturation, ATPase activity is. Associates transiently with small ribosomal subunit protein uS11. ATP hydrolysis breaks the interaction with uS11. May temporarily remove uS11 from the ribosome to enable a conformational change of the ribosomal RNA that is needed for the final maturation step of the small ribosomal subunit. Its NMP activity may have a role in nuclear energy homeostasis. May be involved in regulation of Cajal body (CB) formation.</text>
</comment>
<comment type="catalytic activity">
    <reaction evidence="1">
        <text>AMP + ATP = 2 ADP</text>
        <dbReference type="Rhea" id="RHEA:12973"/>
        <dbReference type="ChEBI" id="CHEBI:30616"/>
        <dbReference type="ChEBI" id="CHEBI:456215"/>
        <dbReference type="ChEBI" id="CHEBI:456216"/>
        <dbReference type="EC" id="2.7.4.3"/>
    </reaction>
</comment>
<comment type="catalytic activity">
    <reaction evidence="1">
        <text>ATP + H2O = ADP + phosphate + H(+)</text>
        <dbReference type="Rhea" id="RHEA:13065"/>
        <dbReference type="ChEBI" id="CHEBI:15377"/>
        <dbReference type="ChEBI" id="CHEBI:15378"/>
        <dbReference type="ChEBI" id="CHEBI:30616"/>
        <dbReference type="ChEBI" id="CHEBI:43474"/>
        <dbReference type="ChEBI" id="CHEBI:456216"/>
    </reaction>
</comment>
<comment type="subunit">
    <text evidence="1">Monomer and homodimer. Interacts with small ribosomal subunit protein uS11. Not a structural component of 43S pre-ribosomes, but transiently interacts with them by binding to uS11. Interacts with COIL (via C-terminus).</text>
</comment>
<comment type="subcellular location">
    <subcellularLocation>
        <location evidence="1">Cytoplasm</location>
    </subcellularLocation>
    <subcellularLocation>
        <location evidence="1">Nucleus</location>
        <location evidence="1">Nucleoplasm</location>
    </subcellularLocation>
    <subcellularLocation>
        <location evidence="1">Nucleus</location>
        <location evidence="1">Cajal body</location>
    </subcellularLocation>
    <text evidence="1">Displays widespread diffuse nucleoplasmic distribution but not detected in nucleoli. Detected in Cajal bodies but not in all cells.</text>
</comment>
<comment type="similarity">
    <text evidence="1">Belongs to the adenylate kinase family. AK6 subfamily.</text>
</comment>
<comment type="caution">
    <text evidence="2">AK6 and TAF9 were initially considered as products of the same gene since they share two exons. However, they are translated from different initiation codons and reading frames and encode unrelated proteins. This arrangement is conserved in some mammalian species.</text>
</comment>
<proteinExistence type="evidence at protein level"/>
<gene>
    <name evidence="1" type="primary">Ak6</name>
    <name type="synonym">Cinap</name>
</gene>
<reference key="1">
    <citation type="journal article" date="2004" name="Genome Res.">
        <title>The status, quality, and expansion of the NIH full-length cDNA project: the Mammalian Gene Collection (MGC).</title>
        <authorList>
            <consortium name="The MGC Project Team"/>
        </authorList>
    </citation>
    <scope>NUCLEOTIDE SEQUENCE [LARGE SCALE MRNA]</scope>
    <source>
        <strain>FVB/N</strain>
        <tissue>Mammary tumor</tissue>
    </source>
</reference>
<reference key="2">
    <citation type="journal article" date="2010" name="Cell">
        <title>A tissue-specific atlas of mouse protein phosphorylation and expression.</title>
        <authorList>
            <person name="Huttlin E.L."/>
            <person name="Jedrychowski M.P."/>
            <person name="Elias J.E."/>
            <person name="Goswami T."/>
            <person name="Rad R."/>
            <person name="Beausoleil S.A."/>
            <person name="Villen J."/>
            <person name="Haas W."/>
            <person name="Sowa M.E."/>
            <person name="Gygi S.P."/>
        </authorList>
    </citation>
    <scope>IDENTIFICATION BY MASS SPECTROMETRY [LARGE SCALE ANALYSIS]</scope>
    <source>
        <tissue>Pancreas</tissue>
        <tissue>Spleen</tissue>
        <tissue>Testis</tissue>
    </source>
</reference>